<keyword id="KW-0167">Capsid protein</keyword>
<keyword id="KW-0175">Coiled coil</keyword>
<keyword id="KW-1015">Disulfide bond</keyword>
<keyword id="KW-0348">Hemagglutinin</keyword>
<keyword id="KW-1032">Host cell membrane</keyword>
<keyword id="KW-1035">Host cytoplasm</keyword>
<keyword id="KW-1037">Host cytoskeleton</keyword>
<keyword id="KW-1038">Host endoplasmic reticulum</keyword>
<keyword id="KW-1043">Host membrane</keyword>
<keyword id="KW-0945">Host-virus interaction</keyword>
<keyword id="KW-0472">Membrane</keyword>
<keyword id="KW-1152">Outer capsid protein</keyword>
<keyword id="KW-1161">Viral attachment to host cell</keyword>
<keyword id="KW-1162">Viral penetration into host cytoplasm</keyword>
<keyword id="KW-1173">Viral penetration via permeabilization of host membrane</keyword>
<keyword id="KW-0946">Virion</keyword>
<keyword id="KW-1160">Virus entry into host cell</keyword>
<comment type="function">
    <molecule>Outer capsid protein VP4</molecule>
    <text evidence="1">Spike-forming protein that mediates virion attachment to the host epithelial cell receptors and plays a major role in cell penetration, determination of host range restriction and virulence. Rotavirus attachment and entry into the host cell probably involves multiple sequential contacts between the outer capsid proteins VP4 and VP7, and the cell receptors. It is subsequently lost, together with VP7, following virus entry into the host cell. Following entry into the host cell, low intracellular or intravesicular Ca(2+) concentration probably causes the calcium-stabilized VP7 trimers to dissociate from the virion. This step is probably necessary for the membrane-disrupting entry step and the release of VP4, which is locked onto the virion by VP7. During the virus exit from the host cell, VP4 seems to be required to target the newly formed virions to the host cell lipid rafts.</text>
</comment>
<comment type="function">
    <molecule>Outer capsid protein VP5*</molecule>
    <text evidence="1">Forms the spike 'foot' and 'body' and acts as a membrane permeabilization protein that mediates release of viral particles from endosomal compartments into the cytoplasm. During entry, the part of VP5* that protrudes from the virus folds back on itself and reorganizes from a local dimer to a trimer. This reorganization may be linked to membrane penetration by exposing VP5* hydrophobic region. In integrin-dependent strains, VP5* targets the integrin heterodimer ITGA2/ITGB1 for cell attachment.</text>
</comment>
<comment type="function">
    <molecule>Outer capsid protein VP8*</molecule>
    <text evidence="1">Forms the head of the spikes and mediates the recognition of specific host cell surface glycans. It is the viral hemagglutinin and an important target of neutralizing antibodies. In sialic acid-dependent strains, VP8* binds to host cell sialic acid, most probably a ganglioside, providing the initial contact. In some other strains, VP8* mediates the attachment to histo-blood group antigens (HBGAs) for viral entry.</text>
</comment>
<comment type="subunit">
    <molecule>Outer capsid protein VP4</molecule>
    <text evidence="1">Homotrimer. VP4 adopts a dimeric appearance above the capsid surface, while forming a trimeric base anchored inside the capsid layer. Only hints of the third molecule are observed above the capsid surface. It probably performs a series of molecular rearrangements during viral entry. Prior to trypsin cleavage, it is flexible. The priming trypsin cleavage triggers its rearrangement into rigid spikes with approximate two-fold symmetry of their protruding parts. After an unknown second triggering event, cleaved VP4 may undergo another rearrangement, in which two VP5* subunits fold back on themselves and join a third subunit to form a tightly associated trimer, shaped like a folded umbrella. Interacts with VP6. Interacts with VP7.</text>
</comment>
<comment type="subunit">
    <molecule>Outer capsid protein VP5*</molecule>
    <text evidence="1">Homotrimer. The trimer is coiled-coil stabilized by its C-terminus, however, its N-terminus, known as antigen domain or 'body', seems to be flexible allowing it to self-associate either as a dimer or a trimer.</text>
</comment>
<comment type="subcellular location">
    <molecule>Outer capsid protein VP4</molecule>
    <subcellularLocation>
        <location evidence="1">Virion</location>
    </subcellularLocation>
    <subcellularLocation>
        <location evidence="1">Host rough endoplasmic reticulum</location>
    </subcellularLocation>
    <subcellularLocation>
        <location evidence="1">Host cell membrane</location>
    </subcellularLocation>
    <subcellularLocation>
        <location evidence="1">Host cytoplasm</location>
        <location evidence="1">Host cytoskeleton</location>
    </subcellularLocation>
    <subcellularLocation>
        <location evidence="1">Host endoplasmic reticulum-Golgi intermediate compartment</location>
    </subcellularLocation>
    <text evidence="1">The outer layer contains 180 copies of VP4, grouped as 60 dimers. Immature double-layered particles assembled in the cytoplasm bud across the membrane of the endoplasmic reticulum, acquiring during this process a transient lipid membrane that is modified with the ER resident viral glycoproteins NSP4 and VP7; these enveloped particles also contain VP4. As the particles move towards the interior of the ER cisternae, the transient lipid membrane and the non-structural protein NSP4 are lost, while the virus surface proteins VP4 and VP7 rearrange to form the outermost virus protein layer, yielding mature infectious triple-layered particles. VP4 also seems to associate with lipid rafts of the host cell membrane probably for the exit of the virus from the infected cell by an alternate pathway.</text>
</comment>
<comment type="subcellular location">
    <molecule>Outer capsid protein VP8*</molecule>
    <subcellularLocation>
        <location evidence="1">Virion</location>
    </subcellularLocation>
    <text evidence="1">Outer capsid protein.</text>
</comment>
<comment type="subcellular location">
    <molecule>Outer capsid protein VP5*</molecule>
    <subcellularLocation>
        <location evidence="1">Virion</location>
    </subcellularLocation>
    <text evidence="1">Outer capsid protein.</text>
</comment>
<comment type="domain">
    <molecule>Outer capsid protein VP4</molecule>
    <text evidence="1">The VP4 spike is divided into a foot, a stalk and body, and a head.</text>
</comment>
<comment type="PTM">
    <molecule>Outer capsid protein VP4</molecule>
    <text evidence="1">Proteolytic cleavage by trypsin results in activation of VP4 functions and greatly increases infectivity. The penetration into the host cell is dependent on trypsin treatment of VP4. It produces two peptides, VP5* and VP8* that remain associated with the virion. Cleavage of VP4 by trypsin probably occurs in vivo in the lumen of the intestine prior to infection of enterocytes. Trypsin seems to be incorporated into the three-layered viral particles but remains inactive as long as the viral outer capsid is intact and would only be activated upon the solubilization of the latter.</text>
</comment>
<comment type="miscellaneous">
    <text evidence="2">This strain probably does not use sialic acid to attach to the host cell.</text>
</comment>
<comment type="miscellaneous">
    <text evidence="1">In group A rotaviruses, VP4 defines the P serotype.</text>
</comment>
<comment type="miscellaneous">
    <text evidence="1">Some rotavirus strains are neuraminidase-sensitive and require sialic acid to attach to the cell surface. Some rotavirus strains are integrin-dependent. Some rotavirus strains depend on ganglioside for their entry into the host cell. Hsp70 also seems to be involved in the entry of some strains.</text>
</comment>
<comment type="similarity">
    <text evidence="1">Belongs to the rotavirus VP4 family.</text>
</comment>
<organismHost>
    <name type="scientific">Homo sapiens</name>
    <name type="common">Human</name>
    <dbReference type="NCBI Taxonomy" id="9606"/>
</organismHost>
<feature type="chain" id="PRO_0000368113" description="Outer capsid protein VP4" evidence="1">
    <location>
        <begin position="1"/>
        <end position="775"/>
    </location>
</feature>
<feature type="chain" id="PRO_0000368114" description="Outer capsid protein VP8*" evidence="1">
    <location>
        <begin position="1"/>
        <end position="230"/>
    </location>
</feature>
<feature type="chain" id="PRO_0000368115" description="Outer capsid protein VP5*" evidence="1">
    <location>
        <begin position="247"/>
        <end position="775"/>
    </location>
</feature>
<feature type="region of interest" description="Spike head" evidence="1">
    <location>
        <begin position="65"/>
        <end position="223"/>
    </location>
</feature>
<feature type="region of interest" description="Spike body and stalk (antigen domain)" evidence="1">
    <location>
        <begin position="247"/>
        <end position="478"/>
    </location>
</feature>
<feature type="region of interest" description="Hydrophobic; possible role in virus entry into host cell" evidence="1">
    <location>
        <begin position="388"/>
        <end position="408"/>
    </location>
</feature>
<feature type="region of interest" description="Spike foot" evidence="1">
    <location>
        <begin position="509"/>
        <end position="775"/>
    </location>
</feature>
<feature type="coiled-coil region" evidence="1">
    <location>
        <begin position="483"/>
        <end position="510"/>
    </location>
</feature>
<feature type="short sequence motif" description="DGE motif; interaction with ITGA2/ITGB1 heterodimer" evidence="1">
    <location>
        <begin position="307"/>
        <end position="309"/>
    </location>
</feature>
<feature type="short sequence motif" description="YGL motif; interaction with ITGA4" evidence="1">
    <location>
        <begin position="447"/>
        <end position="449"/>
    </location>
</feature>
<feature type="short sequence motif" description="KID motif; interaction with HSPA8" evidence="1">
    <location>
        <begin position="643"/>
        <end position="645"/>
    </location>
</feature>
<feature type="site" description="Cleavage" evidence="1">
    <location>
        <begin position="230"/>
        <end position="231"/>
    </location>
</feature>
<feature type="site" description="Cleavage" evidence="1">
    <location>
        <begin position="240"/>
        <end position="241"/>
    </location>
</feature>
<feature type="site" description="Cleavage; associated with enhancement of infectivity" evidence="1">
    <location>
        <begin position="246"/>
        <end position="247"/>
    </location>
</feature>
<feature type="disulfide bond" evidence="1">
    <location>
        <begin position="317"/>
        <end position="379"/>
    </location>
</feature>
<accession>B3SRX5</accession>
<dbReference type="EMBL" id="EF672619">
    <property type="protein sequence ID" value="ABV53300.1"/>
    <property type="molecule type" value="Genomic_RNA"/>
</dbReference>
<dbReference type="SMR" id="B3SRX5"/>
<dbReference type="Proteomes" id="UP000006580">
    <property type="component" value="Genome"/>
</dbReference>
<dbReference type="GO" id="GO:0044172">
    <property type="term" value="C:host cell endoplasmic reticulum-Golgi intermediate compartment"/>
    <property type="evidence" value="ECO:0007669"/>
    <property type="project" value="UniProtKB-SubCell"/>
</dbReference>
<dbReference type="GO" id="GO:0020002">
    <property type="term" value="C:host cell plasma membrane"/>
    <property type="evidence" value="ECO:0007669"/>
    <property type="project" value="UniProtKB-SubCell"/>
</dbReference>
<dbReference type="GO" id="GO:0044168">
    <property type="term" value="C:host cell rough endoplasmic reticulum"/>
    <property type="evidence" value="ECO:0007669"/>
    <property type="project" value="UniProtKB-SubCell"/>
</dbReference>
<dbReference type="GO" id="GO:0044163">
    <property type="term" value="C:host cytoskeleton"/>
    <property type="evidence" value="ECO:0007669"/>
    <property type="project" value="UniProtKB-SubCell"/>
</dbReference>
<dbReference type="GO" id="GO:0016020">
    <property type="term" value="C:membrane"/>
    <property type="evidence" value="ECO:0007669"/>
    <property type="project" value="UniProtKB-KW"/>
</dbReference>
<dbReference type="GO" id="GO:0039624">
    <property type="term" value="C:viral outer capsid"/>
    <property type="evidence" value="ECO:0007669"/>
    <property type="project" value="UniProtKB-UniRule"/>
</dbReference>
<dbReference type="GO" id="GO:0039665">
    <property type="term" value="P:permeabilization of host organelle membrane involved in viral entry into host cell"/>
    <property type="evidence" value="ECO:0007669"/>
    <property type="project" value="UniProtKB-UniRule"/>
</dbReference>
<dbReference type="GO" id="GO:0019062">
    <property type="term" value="P:virion attachment to host cell"/>
    <property type="evidence" value="ECO:0007669"/>
    <property type="project" value="UniProtKB-UniRule"/>
</dbReference>
<dbReference type="FunFam" id="2.60.120.200:FF:000303">
    <property type="entry name" value="Outer capsid protein VP4"/>
    <property type="match status" value="1"/>
</dbReference>
<dbReference type="Gene3D" id="1.20.5.170">
    <property type="match status" value="1"/>
</dbReference>
<dbReference type="Gene3D" id="2.60.120.200">
    <property type="match status" value="1"/>
</dbReference>
<dbReference type="HAMAP" id="MF_04132">
    <property type="entry name" value="Rota_A_VP4"/>
    <property type="match status" value="1"/>
</dbReference>
<dbReference type="HAMAP" id="MF_04125">
    <property type="entry name" value="Rota_VP4"/>
    <property type="match status" value="1"/>
</dbReference>
<dbReference type="InterPro" id="IPR013320">
    <property type="entry name" value="ConA-like_dom_sf"/>
</dbReference>
<dbReference type="InterPro" id="IPR042546">
    <property type="entry name" value="Rota_A_VP4"/>
</dbReference>
<dbReference type="InterPro" id="IPR035330">
    <property type="entry name" value="Rota_VP4_MID"/>
</dbReference>
<dbReference type="InterPro" id="IPR038017">
    <property type="entry name" value="Rota_VP4_MID_sf"/>
</dbReference>
<dbReference type="InterPro" id="IPR000416">
    <property type="entry name" value="VP4_concanavalin-like"/>
</dbReference>
<dbReference type="InterPro" id="IPR035329">
    <property type="entry name" value="VP4_helical"/>
</dbReference>
<dbReference type="Pfam" id="PF17477">
    <property type="entry name" value="Rota_VP4_MID"/>
    <property type="match status" value="1"/>
</dbReference>
<dbReference type="Pfam" id="PF00426">
    <property type="entry name" value="VP4_haemagglut"/>
    <property type="match status" value="1"/>
</dbReference>
<dbReference type="Pfam" id="PF17478">
    <property type="entry name" value="VP4_helical"/>
    <property type="match status" value="1"/>
</dbReference>
<dbReference type="SUPFAM" id="SSF49899">
    <property type="entry name" value="Concanavalin A-like lectins/glucanases"/>
    <property type="match status" value="1"/>
</dbReference>
<dbReference type="SUPFAM" id="SSF111379">
    <property type="entry name" value="VP4 membrane interaction domain"/>
    <property type="match status" value="1"/>
</dbReference>
<sequence>MASLIYRQLLTNSYSVDLHDEIEQIGSEKTQNVTVNPGPFAQTRYAPVNWGHGEINDSTTVEPILDGPYQPTTFTPPIDYWILINSNTNGVVYESTNNSDFWTAVVAVEPHVNPVDRQYTVFGENKQFNVRNDSDKWKFLEMFRSSSQNEFYNRRTLTSHTKLVGILKYGGRIWTFHGETPRATTDSSNTANLNDISIIVHSEFYIIPRSQESKCNEYINNGLPPIQNTRNVVPLSLSSRSIQYKRAQVNEDITISKTSLWKEMQYNSDIIIRFKFGNSIVKLGGLGYKWSEISFKAANYQYNYLRDGEQVTAHTTCSVNGVNNFSYNGGSLPTDFSVSRYEVIKENSYVYVDYWDDSKAFRNMVYVRSLAANLNSVKCTGGSYNFSLPVGAWPVMNGGAVSLHFAGVTLSTQFTDFVSLNSLRFRFSLTVDEPSFSILRTRTVNLYGLPAANPNNGNEYYEISGRFSLISLVPTNDDYQTPIMNSVTVRQDLERQLTDLREEFNSLSQEIAMSQLIDLALLPLDMFSMFSGIKSTIDLTKSMATSVMKKFRKSKLATSISEMTNSLSDAASSASRSVSIRSNISTISNLTNVSNDVSNVTNSLNDISTQTSTISKKLRLREMITQTEGMSFDDISAAVLKTKIDMSTQIGKNTLPDIVTEASEKFIPKRSYRILKDDEVMEINTEGKVFAYKIDTLNEVPFDVNKFAELVTNSPVISAIIDFKTLKNLNDNYGITRIEALNLIKSNPNVLRNFINQNNPIIRNRIEQLILQCKL</sequence>
<name>VP4_ROTWI</name>
<reference key="1">
    <citation type="journal article" date="2008" name="J. Virol.">
        <title>Group A human rotavirus genomics: evidence that gene constellations are influenced by viral protein interactions.</title>
        <authorList>
            <person name="Heiman E.M."/>
            <person name="McDonald S.M."/>
            <person name="Barro M."/>
            <person name="Taraporewala Z.F."/>
            <person name="Bar-Magen T."/>
            <person name="Patton J.T."/>
        </authorList>
    </citation>
    <scope>NUCLEOTIDE SEQUENCE [GENOMIC RNA]</scope>
</reference>
<reference key="2">
    <citation type="journal article" date="2006" name="Glycoconj. J.">
        <title>Role of sialic acids in rotavirus infection.</title>
        <authorList>
            <person name="Isa P."/>
            <person name="Arias C.F."/>
            <person name="Lopez S."/>
        </authorList>
    </citation>
    <scope>REVIEW</scope>
</reference>
<proteinExistence type="inferred from homology"/>
<evidence type="ECO:0000255" key="1">
    <source>
        <dbReference type="HAMAP-Rule" id="MF_04132"/>
    </source>
</evidence>
<evidence type="ECO:0000303" key="2">
    <source>
    </source>
</evidence>
<organism>
    <name type="scientific">Rotavirus A (isolate RVA/Human/United States/WI61/1983/G9P1A[8])</name>
    <name type="common">RV-A</name>
    <dbReference type="NCBI Taxonomy" id="578830"/>
    <lineage>
        <taxon>Viruses</taxon>
        <taxon>Riboviria</taxon>
        <taxon>Orthornavirae</taxon>
        <taxon>Duplornaviricota</taxon>
        <taxon>Resentoviricetes</taxon>
        <taxon>Reovirales</taxon>
        <taxon>Sedoreoviridae</taxon>
        <taxon>Rotavirus</taxon>
        <taxon>Rotavirus A</taxon>
    </lineage>
</organism>
<protein>
    <recommendedName>
        <fullName evidence="1">Outer capsid protein VP4</fullName>
    </recommendedName>
    <alternativeName>
        <fullName evidence="1">Hemagglutinin</fullName>
    </alternativeName>
    <component>
        <recommendedName>
            <fullName evidence="1">Outer capsid protein VP8*</fullName>
        </recommendedName>
    </component>
    <component>
        <recommendedName>
            <fullName evidence="1">Outer capsid protein VP5*</fullName>
        </recommendedName>
    </component>
</protein>